<accession>B2JI62</accession>
<dbReference type="EMBL" id="CP001043">
    <property type="protein sequence ID" value="ACC72008.1"/>
    <property type="molecule type" value="Genomic_DNA"/>
</dbReference>
<dbReference type="RefSeq" id="WP_006998484.1">
    <property type="nucleotide sequence ID" value="NZ_CADFGH010000028.1"/>
</dbReference>
<dbReference type="SMR" id="B2JI62"/>
<dbReference type="STRING" id="391038.Bphy_2836"/>
<dbReference type="GeneID" id="69968024"/>
<dbReference type="KEGG" id="bph:Bphy_2836"/>
<dbReference type="eggNOG" id="COG0185">
    <property type="taxonomic scope" value="Bacteria"/>
</dbReference>
<dbReference type="HOGENOM" id="CLU_144911_0_1_4"/>
<dbReference type="OrthoDB" id="9797833at2"/>
<dbReference type="Proteomes" id="UP000001192">
    <property type="component" value="Chromosome 1"/>
</dbReference>
<dbReference type="GO" id="GO:0005737">
    <property type="term" value="C:cytoplasm"/>
    <property type="evidence" value="ECO:0007669"/>
    <property type="project" value="UniProtKB-ARBA"/>
</dbReference>
<dbReference type="GO" id="GO:0015935">
    <property type="term" value="C:small ribosomal subunit"/>
    <property type="evidence" value="ECO:0007669"/>
    <property type="project" value="InterPro"/>
</dbReference>
<dbReference type="GO" id="GO:0019843">
    <property type="term" value="F:rRNA binding"/>
    <property type="evidence" value="ECO:0007669"/>
    <property type="project" value="UniProtKB-UniRule"/>
</dbReference>
<dbReference type="GO" id="GO:0003735">
    <property type="term" value="F:structural constituent of ribosome"/>
    <property type="evidence" value="ECO:0007669"/>
    <property type="project" value="InterPro"/>
</dbReference>
<dbReference type="GO" id="GO:0000028">
    <property type="term" value="P:ribosomal small subunit assembly"/>
    <property type="evidence" value="ECO:0007669"/>
    <property type="project" value="TreeGrafter"/>
</dbReference>
<dbReference type="GO" id="GO:0006412">
    <property type="term" value="P:translation"/>
    <property type="evidence" value="ECO:0007669"/>
    <property type="project" value="UniProtKB-UniRule"/>
</dbReference>
<dbReference type="FunFam" id="3.30.860.10:FF:000001">
    <property type="entry name" value="30S ribosomal protein S19"/>
    <property type="match status" value="1"/>
</dbReference>
<dbReference type="Gene3D" id="3.30.860.10">
    <property type="entry name" value="30s Ribosomal Protein S19, Chain A"/>
    <property type="match status" value="1"/>
</dbReference>
<dbReference type="HAMAP" id="MF_00531">
    <property type="entry name" value="Ribosomal_uS19"/>
    <property type="match status" value="1"/>
</dbReference>
<dbReference type="InterPro" id="IPR002222">
    <property type="entry name" value="Ribosomal_uS19"/>
</dbReference>
<dbReference type="InterPro" id="IPR005732">
    <property type="entry name" value="Ribosomal_uS19_bac-type"/>
</dbReference>
<dbReference type="InterPro" id="IPR020934">
    <property type="entry name" value="Ribosomal_uS19_CS"/>
</dbReference>
<dbReference type="InterPro" id="IPR023575">
    <property type="entry name" value="Ribosomal_uS19_SF"/>
</dbReference>
<dbReference type="NCBIfam" id="TIGR01050">
    <property type="entry name" value="rpsS_bact"/>
    <property type="match status" value="1"/>
</dbReference>
<dbReference type="PANTHER" id="PTHR11880">
    <property type="entry name" value="RIBOSOMAL PROTEIN S19P FAMILY MEMBER"/>
    <property type="match status" value="1"/>
</dbReference>
<dbReference type="PANTHER" id="PTHR11880:SF8">
    <property type="entry name" value="SMALL RIBOSOMAL SUBUNIT PROTEIN US19M"/>
    <property type="match status" value="1"/>
</dbReference>
<dbReference type="Pfam" id="PF00203">
    <property type="entry name" value="Ribosomal_S19"/>
    <property type="match status" value="1"/>
</dbReference>
<dbReference type="PIRSF" id="PIRSF002144">
    <property type="entry name" value="Ribosomal_S19"/>
    <property type="match status" value="1"/>
</dbReference>
<dbReference type="PRINTS" id="PR00975">
    <property type="entry name" value="RIBOSOMALS19"/>
</dbReference>
<dbReference type="SUPFAM" id="SSF54570">
    <property type="entry name" value="Ribosomal protein S19"/>
    <property type="match status" value="1"/>
</dbReference>
<dbReference type="PROSITE" id="PS00323">
    <property type="entry name" value="RIBOSOMAL_S19"/>
    <property type="match status" value="1"/>
</dbReference>
<keyword id="KW-1185">Reference proteome</keyword>
<keyword id="KW-0687">Ribonucleoprotein</keyword>
<keyword id="KW-0689">Ribosomal protein</keyword>
<keyword id="KW-0694">RNA-binding</keyword>
<keyword id="KW-0699">rRNA-binding</keyword>
<protein>
    <recommendedName>
        <fullName evidence="1">Small ribosomal subunit protein uS19</fullName>
    </recommendedName>
    <alternativeName>
        <fullName evidence="2">30S ribosomal protein S19</fullName>
    </alternativeName>
</protein>
<feature type="chain" id="PRO_1000127942" description="Small ribosomal subunit protein uS19">
    <location>
        <begin position="1"/>
        <end position="91"/>
    </location>
</feature>
<comment type="function">
    <text evidence="1">Protein S19 forms a complex with S13 that binds strongly to the 16S ribosomal RNA.</text>
</comment>
<comment type="similarity">
    <text evidence="1">Belongs to the universal ribosomal protein uS19 family.</text>
</comment>
<name>RS19_PARP8</name>
<reference key="1">
    <citation type="journal article" date="2014" name="Stand. Genomic Sci.">
        <title>Complete genome sequence of Burkholderia phymatum STM815(T), a broad host range and efficient nitrogen-fixing symbiont of Mimosa species.</title>
        <authorList>
            <person name="Moulin L."/>
            <person name="Klonowska A."/>
            <person name="Caroline B."/>
            <person name="Booth K."/>
            <person name="Vriezen J.A."/>
            <person name="Melkonian R."/>
            <person name="James E.K."/>
            <person name="Young J.P."/>
            <person name="Bena G."/>
            <person name="Hauser L."/>
            <person name="Land M."/>
            <person name="Kyrpides N."/>
            <person name="Bruce D."/>
            <person name="Chain P."/>
            <person name="Copeland A."/>
            <person name="Pitluck S."/>
            <person name="Woyke T."/>
            <person name="Lizotte-Waniewski M."/>
            <person name="Bristow J."/>
            <person name="Riley M."/>
        </authorList>
    </citation>
    <scope>NUCLEOTIDE SEQUENCE [LARGE SCALE GENOMIC DNA]</scope>
    <source>
        <strain>DSM 17167 / CIP 108236 / LMG 21445 / STM815</strain>
    </source>
</reference>
<proteinExistence type="inferred from homology"/>
<sequence length="91" mass="10122">MARSIKKGPFCDAHLLKKVEAAAASRDKKPIKTWSRRSTILPDFIGLTIAVHNGRQHVPVYVTENMVGHKLGEFALTRTFKGHAADKKAKK</sequence>
<organism>
    <name type="scientific">Paraburkholderia phymatum (strain DSM 17167 / CIP 108236 / LMG 21445 / STM815)</name>
    <name type="common">Burkholderia phymatum</name>
    <dbReference type="NCBI Taxonomy" id="391038"/>
    <lineage>
        <taxon>Bacteria</taxon>
        <taxon>Pseudomonadati</taxon>
        <taxon>Pseudomonadota</taxon>
        <taxon>Betaproteobacteria</taxon>
        <taxon>Burkholderiales</taxon>
        <taxon>Burkholderiaceae</taxon>
        <taxon>Paraburkholderia</taxon>
    </lineage>
</organism>
<gene>
    <name evidence="1" type="primary">rpsS</name>
    <name type="ordered locus">Bphy_2836</name>
</gene>
<evidence type="ECO:0000255" key="1">
    <source>
        <dbReference type="HAMAP-Rule" id="MF_00531"/>
    </source>
</evidence>
<evidence type="ECO:0000305" key="2"/>